<organism>
    <name type="scientific">Paraburkholderia phytofirmans (strain DSM 17436 / LMG 22146 / PsJN)</name>
    <name type="common">Burkholderia phytofirmans</name>
    <dbReference type="NCBI Taxonomy" id="398527"/>
    <lineage>
        <taxon>Bacteria</taxon>
        <taxon>Pseudomonadati</taxon>
        <taxon>Pseudomonadota</taxon>
        <taxon>Betaproteobacteria</taxon>
        <taxon>Burkholderiales</taxon>
        <taxon>Burkholderiaceae</taxon>
        <taxon>Paraburkholderia</taxon>
    </lineage>
</organism>
<protein>
    <recommendedName>
        <fullName evidence="1">Pyridoxine/pyridoxamine 5'-phosphate oxidase</fullName>
        <ecNumber evidence="1">1.4.3.5</ecNumber>
    </recommendedName>
    <alternativeName>
        <fullName evidence="1">PNP/PMP oxidase</fullName>
        <shortName evidence="1">PNPOx</shortName>
    </alternativeName>
    <alternativeName>
        <fullName evidence="1">Pyridoxal 5'-phosphate synthase</fullName>
    </alternativeName>
</protein>
<sequence>MTSLAELRKNYSLGSLDVADIDRNPFRQFDTWFQQAVDAKLPEPNTMTLATVDSRGRPSARIVLIKGVDERGFVFFTNYESRKGRELAANPYASLLFYWIELERQVRVEGRIVKTSAEESDAYFASRPLGSRIGAWASNQSQLIESRSQLETREREISLQYGDQPPRPPHWGGYRLVPEAIEFWQGRPSRLHDRLLYTRSDEHSDWQISRLSP</sequence>
<comment type="function">
    <text evidence="1">Catalyzes the oxidation of either pyridoxine 5'-phosphate (PNP) or pyridoxamine 5'-phosphate (PMP) into pyridoxal 5'-phosphate (PLP).</text>
</comment>
<comment type="catalytic activity">
    <reaction evidence="1">
        <text>pyridoxamine 5'-phosphate + O2 + H2O = pyridoxal 5'-phosphate + H2O2 + NH4(+)</text>
        <dbReference type="Rhea" id="RHEA:15817"/>
        <dbReference type="ChEBI" id="CHEBI:15377"/>
        <dbReference type="ChEBI" id="CHEBI:15379"/>
        <dbReference type="ChEBI" id="CHEBI:16240"/>
        <dbReference type="ChEBI" id="CHEBI:28938"/>
        <dbReference type="ChEBI" id="CHEBI:58451"/>
        <dbReference type="ChEBI" id="CHEBI:597326"/>
        <dbReference type="EC" id="1.4.3.5"/>
    </reaction>
</comment>
<comment type="catalytic activity">
    <reaction evidence="1">
        <text>pyridoxine 5'-phosphate + O2 = pyridoxal 5'-phosphate + H2O2</text>
        <dbReference type="Rhea" id="RHEA:15149"/>
        <dbReference type="ChEBI" id="CHEBI:15379"/>
        <dbReference type="ChEBI" id="CHEBI:16240"/>
        <dbReference type="ChEBI" id="CHEBI:58589"/>
        <dbReference type="ChEBI" id="CHEBI:597326"/>
        <dbReference type="EC" id="1.4.3.5"/>
    </reaction>
</comment>
<comment type="cofactor">
    <cofactor evidence="1">
        <name>FMN</name>
        <dbReference type="ChEBI" id="CHEBI:58210"/>
    </cofactor>
    <text evidence="1">Binds 1 FMN per subunit.</text>
</comment>
<comment type="pathway">
    <text evidence="1">Cofactor metabolism; pyridoxal 5'-phosphate salvage; pyridoxal 5'-phosphate from pyridoxamine 5'-phosphate: step 1/1.</text>
</comment>
<comment type="pathway">
    <text evidence="1">Cofactor metabolism; pyridoxal 5'-phosphate salvage; pyridoxal 5'-phosphate from pyridoxine 5'-phosphate: step 1/1.</text>
</comment>
<comment type="subunit">
    <text evidence="1">Homodimer.</text>
</comment>
<comment type="similarity">
    <text evidence="1">Belongs to the pyridoxamine 5'-phosphate oxidase family.</text>
</comment>
<name>PDXH_PARPJ</name>
<reference key="1">
    <citation type="journal article" date="2011" name="J. Bacteriol.">
        <title>Complete genome sequence of the plant growth-promoting endophyte Burkholderia phytofirmans strain PsJN.</title>
        <authorList>
            <person name="Weilharter A."/>
            <person name="Mitter B."/>
            <person name="Shin M.V."/>
            <person name="Chain P.S."/>
            <person name="Nowak J."/>
            <person name="Sessitsch A."/>
        </authorList>
    </citation>
    <scope>NUCLEOTIDE SEQUENCE [LARGE SCALE GENOMIC DNA]</scope>
    <source>
        <strain>DSM 17436 / LMG 22146 / PsJN</strain>
    </source>
</reference>
<proteinExistence type="inferred from homology"/>
<feature type="chain" id="PRO_1000186297" description="Pyridoxine/pyridoxamine 5'-phosphate oxidase">
    <location>
        <begin position="1"/>
        <end position="213"/>
    </location>
</feature>
<feature type="binding site" evidence="1">
    <location>
        <begin position="8"/>
        <end position="11"/>
    </location>
    <ligand>
        <name>substrate</name>
    </ligand>
</feature>
<feature type="binding site" evidence="1">
    <location>
        <begin position="61"/>
        <end position="66"/>
    </location>
    <ligand>
        <name>FMN</name>
        <dbReference type="ChEBI" id="CHEBI:58210"/>
    </ligand>
</feature>
<feature type="binding site" evidence="1">
    <location>
        <position position="66"/>
    </location>
    <ligand>
        <name>substrate</name>
    </ligand>
</feature>
<feature type="binding site" evidence="1">
    <location>
        <begin position="76"/>
        <end position="77"/>
    </location>
    <ligand>
        <name>FMN</name>
        <dbReference type="ChEBI" id="CHEBI:58210"/>
    </ligand>
</feature>
<feature type="binding site" evidence="1">
    <location>
        <position position="82"/>
    </location>
    <ligand>
        <name>FMN</name>
        <dbReference type="ChEBI" id="CHEBI:58210"/>
    </ligand>
</feature>
<feature type="binding site" evidence="1">
    <location>
        <position position="83"/>
    </location>
    <ligand>
        <name>FMN</name>
        <dbReference type="ChEBI" id="CHEBI:58210"/>
    </ligand>
</feature>
<feature type="binding site" evidence="1">
    <location>
        <position position="105"/>
    </location>
    <ligand>
        <name>FMN</name>
        <dbReference type="ChEBI" id="CHEBI:58210"/>
    </ligand>
</feature>
<feature type="binding site" evidence="1">
    <location>
        <position position="123"/>
    </location>
    <ligand>
        <name>substrate</name>
    </ligand>
</feature>
<feature type="binding site" evidence="1">
    <location>
        <position position="127"/>
    </location>
    <ligand>
        <name>substrate</name>
    </ligand>
</feature>
<feature type="binding site" evidence="1">
    <location>
        <position position="131"/>
    </location>
    <ligand>
        <name>substrate</name>
    </ligand>
</feature>
<feature type="binding site" evidence="1">
    <location>
        <begin position="140"/>
        <end position="141"/>
    </location>
    <ligand>
        <name>FMN</name>
        <dbReference type="ChEBI" id="CHEBI:58210"/>
    </ligand>
</feature>
<feature type="binding site" evidence="1">
    <location>
        <position position="184"/>
    </location>
    <ligand>
        <name>FMN</name>
        <dbReference type="ChEBI" id="CHEBI:58210"/>
    </ligand>
</feature>
<feature type="binding site" evidence="1">
    <location>
        <begin position="190"/>
        <end position="192"/>
    </location>
    <ligand>
        <name>substrate</name>
    </ligand>
</feature>
<feature type="binding site" evidence="1">
    <location>
        <position position="194"/>
    </location>
    <ligand>
        <name>FMN</name>
        <dbReference type="ChEBI" id="CHEBI:58210"/>
    </ligand>
</feature>
<accession>B2SY78</accession>
<evidence type="ECO:0000255" key="1">
    <source>
        <dbReference type="HAMAP-Rule" id="MF_01629"/>
    </source>
</evidence>
<gene>
    <name evidence="1" type="primary">pdxH</name>
    <name type="ordered locus">Bphyt_3221</name>
</gene>
<keyword id="KW-0285">Flavoprotein</keyword>
<keyword id="KW-0288">FMN</keyword>
<keyword id="KW-0560">Oxidoreductase</keyword>
<keyword id="KW-0664">Pyridoxine biosynthesis</keyword>
<dbReference type="EC" id="1.4.3.5" evidence="1"/>
<dbReference type="EMBL" id="CP001052">
    <property type="protein sequence ID" value="ACD17613.1"/>
    <property type="molecule type" value="Genomic_DNA"/>
</dbReference>
<dbReference type="RefSeq" id="WP_012434183.1">
    <property type="nucleotide sequence ID" value="NC_010681.1"/>
</dbReference>
<dbReference type="SMR" id="B2SY78"/>
<dbReference type="STRING" id="398527.Bphyt_3221"/>
<dbReference type="KEGG" id="bpy:Bphyt_3221"/>
<dbReference type="eggNOG" id="COG0259">
    <property type="taxonomic scope" value="Bacteria"/>
</dbReference>
<dbReference type="HOGENOM" id="CLU_032263_2_2_4"/>
<dbReference type="OrthoDB" id="9780392at2"/>
<dbReference type="UniPathway" id="UPA01068">
    <property type="reaction ID" value="UER00304"/>
</dbReference>
<dbReference type="UniPathway" id="UPA01068">
    <property type="reaction ID" value="UER00305"/>
</dbReference>
<dbReference type="Proteomes" id="UP000001739">
    <property type="component" value="Chromosome 1"/>
</dbReference>
<dbReference type="GO" id="GO:0010181">
    <property type="term" value="F:FMN binding"/>
    <property type="evidence" value="ECO:0007669"/>
    <property type="project" value="UniProtKB-UniRule"/>
</dbReference>
<dbReference type="GO" id="GO:0004733">
    <property type="term" value="F:pyridoxamine phosphate oxidase activity"/>
    <property type="evidence" value="ECO:0007669"/>
    <property type="project" value="UniProtKB-UniRule"/>
</dbReference>
<dbReference type="GO" id="GO:0008615">
    <property type="term" value="P:pyridoxine biosynthetic process"/>
    <property type="evidence" value="ECO:0007669"/>
    <property type="project" value="UniProtKB-KW"/>
</dbReference>
<dbReference type="FunFam" id="2.30.110.10:FF:000005">
    <property type="entry name" value="NAD(P)H-hydrate epimerase"/>
    <property type="match status" value="1"/>
</dbReference>
<dbReference type="Gene3D" id="2.30.110.10">
    <property type="entry name" value="Electron Transport, Fmn-binding Protein, Chain A"/>
    <property type="match status" value="1"/>
</dbReference>
<dbReference type="HAMAP" id="MF_01629">
    <property type="entry name" value="PdxH"/>
    <property type="match status" value="1"/>
</dbReference>
<dbReference type="InterPro" id="IPR000659">
    <property type="entry name" value="Pyridox_Oxase"/>
</dbReference>
<dbReference type="InterPro" id="IPR019740">
    <property type="entry name" value="Pyridox_Oxase_CS"/>
</dbReference>
<dbReference type="InterPro" id="IPR011576">
    <property type="entry name" value="Pyridox_Oxase_N"/>
</dbReference>
<dbReference type="InterPro" id="IPR019576">
    <property type="entry name" value="Pyridoxamine_oxidase_dimer_C"/>
</dbReference>
<dbReference type="InterPro" id="IPR012349">
    <property type="entry name" value="Split_barrel_FMN-bd"/>
</dbReference>
<dbReference type="NCBIfam" id="TIGR00558">
    <property type="entry name" value="pdxH"/>
    <property type="match status" value="1"/>
</dbReference>
<dbReference type="NCBIfam" id="NF004231">
    <property type="entry name" value="PRK05679.1"/>
    <property type="match status" value="1"/>
</dbReference>
<dbReference type="PANTHER" id="PTHR10851:SF0">
    <property type="entry name" value="PYRIDOXINE-5'-PHOSPHATE OXIDASE"/>
    <property type="match status" value="1"/>
</dbReference>
<dbReference type="PANTHER" id="PTHR10851">
    <property type="entry name" value="PYRIDOXINE-5-PHOSPHATE OXIDASE"/>
    <property type="match status" value="1"/>
</dbReference>
<dbReference type="Pfam" id="PF10590">
    <property type="entry name" value="PNP_phzG_C"/>
    <property type="match status" value="1"/>
</dbReference>
<dbReference type="Pfam" id="PF01243">
    <property type="entry name" value="PNPOx_N"/>
    <property type="match status" value="1"/>
</dbReference>
<dbReference type="PIRSF" id="PIRSF000190">
    <property type="entry name" value="Pyd_amn-ph_oxd"/>
    <property type="match status" value="1"/>
</dbReference>
<dbReference type="SUPFAM" id="SSF50475">
    <property type="entry name" value="FMN-binding split barrel"/>
    <property type="match status" value="1"/>
</dbReference>
<dbReference type="PROSITE" id="PS01064">
    <property type="entry name" value="PYRIDOX_OXIDASE"/>
    <property type="match status" value="1"/>
</dbReference>